<name>COA1_HUMAN</name>
<sequence length="146" mass="16694">MMWQKYAGSRRSMPLGARILFHGVFYAGGFAIVYYLIQKFHSRALYYKLAVEQLQSHPEAQEALGPPLNIHYLKLIDRENFVDIVDAKLKIPVSGSKSEGLLYVHSSRGGPFQRWHLDEVFLELKDGQQIPVFKLSGENGDEVKKE</sequence>
<reference key="1">
    <citation type="journal article" date="2004" name="Nat. Genet.">
        <title>Complete sequencing and characterization of 21,243 full-length human cDNAs.</title>
        <authorList>
            <person name="Ota T."/>
            <person name="Suzuki Y."/>
            <person name="Nishikawa T."/>
            <person name="Otsuki T."/>
            <person name="Sugiyama T."/>
            <person name="Irie R."/>
            <person name="Wakamatsu A."/>
            <person name="Hayashi K."/>
            <person name="Sato H."/>
            <person name="Nagai K."/>
            <person name="Kimura K."/>
            <person name="Makita H."/>
            <person name="Sekine M."/>
            <person name="Obayashi M."/>
            <person name="Nishi T."/>
            <person name="Shibahara T."/>
            <person name="Tanaka T."/>
            <person name="Ishii S."/>
            <person name="Yamamoto J."/>
            <person name="Saito K."/>
            <person name="Kawai Y."/>
            <person name="Isono Y."/>
            <person name="Nakamura Y."/>
            <person name="Nagahari K."/>
            <person name="Murakami K."/>
            <person name="Yasuda T."/>
            <person name="Iwayanagi T."/>
            <person name="Wagatsuma M."/>
            <person name="Shiratori A."/>
            <person name="Sudo H."/>
            <person name="Hosoiri T."/>
            <person name="Kaku Y."/>
            <person name="Kodaira H."/>
            <person name="Kondo H."/>
            <person name="Sugawara M."/>
            <person name="Takahashi M."/>
            <person name="Kanda K."/>
            <person name="Yokoi T."/>
            <person name="Furuya T."/>
            <person name="Kikkawa E."/>
            <person name="Omura Y."/>
            <person name="Abe K."/>
            <person name="Kamihara K."/>
            <person name="Katsuta N."/>
            <person name="Sato K."/>
            <person name="Tanikawa M."/>
            <person name="Yamazaki M."/>
            <person name="Ninomiya K."/>
            <person name="Ishibashi T."/>
            <person name="Yamashita H."/>
            <person name="Murakawa K."/>
            <person name="Fujimori K."/>
            <person name="Tanai H."/>
            <person name="Kimata M."/>
            <person name="Watanabe M."/>
            <person name="Hiraoka S."/>
            <person name="Chiba Y."/>
            <person name="Ishida S."/>
            <person name="Ono Y."/>
            <person name="Takiguchi S."/>
            <person name="Watanabe S."/>
            <person name="Yosida M."/>
            <person name="Hotuta T."/>
            <person name="Kusano J."/>
            <person name="Kanehori K."/>
            <person name="Takahashi-Fujii A."/>
            <person name="Hara H."/>
            <person name="Tanase T.-O."/>
            <person name="Nomura Y."/>
            <person name="Togiya S."/>
            <person name="Komai F."/>
            <person name="Hara R."/>
            <person name="Takeuchi K."/>
            <person name="Arita M."/>
            <person name="Imose N."/>
            <person name="Musashino K."/>
            <person name="Yuuki H."/>
            <person name="Oshima A."/>
            <person name="Sasaki N."/>
            <person name="Aotsuka S."/>
            <person name="Yoshikawa Y."/>
            <person name="Matsunawa H."/>
            <person name="Ichihara T."/>
            <person name="Shiohata N."/>
            <person name="Sano S."/>
            <person name="Moriya S."/>
            <person name="Momiyama H."/>
            <person name="Satoh N."/>
            <person name="Takami S."/>
            <person name="Terashima Y."/>
            <person name="Suzuki O."/>
            <person name="Nakagawa S."/>
            <person name="Senoh A."/>
            <person name="Mizoguchi H."/>
            <person name="Goto Y."/>
            <person name="Shimizu F."/>
            <person name="Wakebe H."/>
            <person name="Hishigaki H."/>
            <person name="Watanabe T."/>
            <person name="Sugiyama A."/>
            <person name="Takemoto M."/>
            <person name="Kawakami B."/>
            <person name="Yamazaki M."/>
            <person name="Watanabe K."/>
            <person name="Kumagai A."/>
            <person name="Itakura S."/>
            <person name="Fukuzumi Y."/>
            <person name="Fujimori Y."/>
            <person name="Komiyama M."/>
            <person name="Tashiro H."/>
            <person name="Tanigami A."/>
            <person name="Fujiwara T."/>
            <person name="Ono T."/>
            <person name="Yamada K."/>
            <person name="Fujii Y."/>
            <person name="Ozaki K."/>
            <person name="Hirao M."/>
            <person name="Ohmori Y."/>
            <person name="Kawabata A."/>
            <person name="Hikiji T."/>
            <person name="Kobatake N."/>
            <person name="Inagaki H."/>
            <person name="Ikema Y."/>
            <person name="Okamoto S."/>
            <person name="Okitani R."/>
            <person name="Kawakami T."/>
            <person name="Noguchi S."/>
            <person name="Itoh T."/>
            <person name="Shigeta K."/>
            <person name="Senba T."/>
            <person name="Matsumura K."/>
            <person name="Nakajima Y."/>
            <person name="Mizuno T."/>
            <person name="Morinaga M."/>
            <person name="Sasaki M."/>
            <person name="Togashi T."/>
            <person name="Oyama M."/>
            <person name="Hata H."/>
            <person name="Watanabe M."/>
            <person name="Komatsu T."/>
            <person name="Mizushima-Sugano J."/>
            <person name="Satoh T."/>
            <person name="Shirai Y."/>
            <person name="Takahashi Y."/>
            <person name="Nakagawa K."/>
            <person name="Okumura K."/>
            <person name="Nagase T."/>
            <person name="Nomura N."/>
            <person name="Kikuchi H."/>
            <person name="Masuho Y."/>
            <person name="Yamashita R."/>
            <person name="Nakai K."/>
            <person name="Yada T."/>
            <person name="Nakamura Y."/>
            <person name="Ohara O."/>
            <person name="Isogai T."/>
            <person name="Sugano S."/>
        </authorList>
    </citation>
    <scope>NUCLEOTIDE SEQUENCE [LARGE SCALE MRNA]</scope>
    <source>
        <tissue>Embryo</tissue>
        <tissue>Uterus</tissue>
    </source>
</reference>
<reference key="2">
    <citation type="journal article" date="2003" name="Nature">
        <title>The DNA sequence of human chromosome 7.</title>
        <authorList>
            <person name="Hillier L.W."/>
            <person name="Fulton R.S."/>
            <person name="Fulton L.A."/>
            <person name="Graves T.A."/>
            <person name="Pepin K.H."/>
            <person name="Wagner-McPherson C."/>
            <person name="Layman D."/>
            <person name="Maas J."/>
            <person name="Jaeger S."/>
            <person name="Walker R."/>
            <person name="Wylie K."/>
            <person name="Sekhon M."/>
            <person name="Becker M.C."/>
            <person name="O'Laughlin M.D."/>
            <person name="Schaller M.E."/>
            <person name="Fewell G.A."/>
            <person name="Delehaunty K.D."/>
            <person name="Miner T.L."/>
            <person name="Nash W.E."/>
            <person name="Cordes M."/>
            <person name="Du H."/>
            <person name="Sun H."/>
            <person name="Edwards J."/>
            <person name="Bradshaw-Cordum H."/>
            <person name="Ali J."/>
            <person name="Andrews S."/>
            <person name="Isak A."/>
            <person name="Vanbrunt A."/>
            <person name="Nguyen C."/>
            <person name="Du F."/>
            <person name="Lamar B."/>
            <person name="Courtney L."/>
            <person name="Kalicki J."/>
            <person name="Ozersky P."/>
            <person name="Bielicki L."/>
            <person name="Scott K."/>
            <person name="Holmes A."/>
            <person name="Harkins R."/>
            <person name="Harris A."/>
            <person name="Strong C.M."/>
            <person name="Hou S."/>
            <person name="Tomlinson C."/>
            <person name="Dauphin-Kohlberg S."/>
            <person name="Kozlowicz-Reilly A."/>
            <person name="Leonard S."/>
            <person name="Rohlfing T."/>
            <person name="Rock S.M."/>
            <person name="Tin-Wollam A.-M."/>
            <person name="Abbott A."/>
            <person name="Minx P."/>
            <person name="Maupin R."/>
            <person name="Strowmatt C."/>
            <person name="Latreille P."/>
            <person name="Miller N."/>
            <person name="Johnson D."/>
            <person name="Murray J."/>
            <person name="Woessner J.P."/>
            <person name="Wendl M.C."/>
            <person name="Yang S.-P."/>
            <person name="Schultz B.R."/>
            <person name="Wallis J.W."/>
            <person name="Spieth J."/>
            <person name="Bieri T.A."/>
            <person name="Nelson J.O."/>
            <person name="Berkowicz N."/>
            <person name="Wohldmann P.E."/>
            <person name="Cook L.L."/>
            <person name="Hickenbotham M.T."/>
            <person name="Eldred J."/>
            <person name="Williams D."/>
            <person name="Bedell J.A."/>
            <person name="Mardis E.R."/>
            <person name="Clifton S.W."/>
            <person name="Chissoe S.L."/>
            <person name="Marra M.A."/>
            <person name="Raymond C."/>
            <person name="Haugen E."/>
            <person name="Gillett W."/>
            <person name="Zhou Y."/>
            <person name="James R."/>
            <person name="Phelps K."/>
            <person name="Iadanoto S."/>
            <person name="Bubb K."/>
            <person name="Simms E."/>
            <person name="Levy R."/>
            <person name="Clendenning J."/>
            <person name="Kaul R."/>
            <person name="Kent W.J."/>
            <person name="Furey T.S."/>
            <person name="Baertsch R.A."/>
            <person name="Brent M.R."/>
            <person name="Keibler E."/>
            <person name="Flicek P."/>
            <person name="Bork P."/>
            <person name="Suyama M."/>
            <person name="Bailey J.A."/>
            <person name="Portnoy M.E."/>
            <person name="Torrents D."/>
            <person name="Chinwalla A.T."/>
            <person name="Gish W.R."/>
            <person name="Eddy S.R."/>
            <person name="McPherson J.D."/>
            <person name="Olson M.V."/>
            <person name="Eichler E.E."/>
            <person name="Green E.D."/>
            <person name="Waterston R.H."/>
            <person name="Wilson R.K."/>
        </authorList>
    </citation>
    <scope>NUCLEOTIDE SEQUENCE [LARGE SCALE GENOMIC DNA]</scope>
</reference>
<reference key="3">
    <citation type="submission" date="2005-07" db="EMBL/GenBank/DDBJ databases">
        <authorList>
            <person name="Mural R.J."/>
            <person name="Istrail S."/>
            <person name="Sutton G.G."/>
            <person name="Florea L."/>
            <person name="Halpern A.L."/>
            <person name="Mobarry C.M."/>
            <person name="Lippert R."/>
            <person name="Walenz B."/>
            <person name="Shatkay H."/>
            <person name="Dew I."/>
            <person name="Miller J.R."/>
            <person name="Flanigan M.J."/>
            <person name="Edwards N.J."/>
            <person name="Bolanos R."/>
            <person name="Fasulo D."/>
            <person name="Halldorsson B.V."/>
            <person name="Hannenhalli S."/>
            <person name="Turner R."/>
            <person name="Yooseph S."/>
            <person name="Lu F."/>
            <person name="Nusskern D.R."/>
            <person name="Shue B.C."/>
            <person name="Zheng X.H."/>
            <person name="Zhong F."/>
            <person name="Delcher A.L."/>
            <person name="Huson D.H."/>
            <person name="Kravitz S.A."/>
            <person name="Mouchard L."/>
            <person name="Reinert K."/>
            <person name="Remington K.A."/>
            <person name="Clark A.G."/>
            <person name="Waterman M.S."/>
            <person name="Eichler E.E."/>
            <person name="Adams M.D."/>
            <person name="Hunkapiller M.W."/>
            <person name="Myers E.W."/>
            <person name="Venter J.C."/>
        </authorList>
    </citation>
    <scope>NUCLEOTIDE SEQUENCE [LARGE SCALE GENOMIC DNA]</scope>
</reference>
<reference key="4">
    <citation type="journal article" date="2004" name="Genome Res.">
        <title>The status, quality, and expansion of the NIH full-length cDNA project: the Mammalian Gene Collection (MGC).</title>
        <authorList>
            <consortium name="The MGC Project Team"/>
        </authorList>
    </citation>
    <scope>NUCLEOTIDE SEQUENCE [LARGE SCALE MRNA]</scope>
    <source>
        <tissue>Skin</tissue>
    </source>
</reference>
<reference key="5">
    <citation type="journal article" date="2011" name="BMC Syst. Biol.">
        <title>Initial characterization of the human central proteome.</title>
        <authorList>
            <person name="Burkard T.R."/>
            <person name="Planyavsky M."/>
            <person name="Kaupe I."/>
            <person name="Breitwieser F.P."/>
            <person name="Buerckstuemmer T."/>
            <person name="Bennett K.L."/>
            <person name="Superti-Furga G."/>
            <person name="Colinge J."/>
        </authorList>
    </citation>
    <scope>IDENTIFICATION BY MASS SPECTROMETRY [LARGE SCALE ANALYSIS]</scope>
</reference>
<reference key="6">
    <citation type="journal article" date="2012" name="Cell">
        <title>MITRAC links mitochondrial protein translocation to respiratory-chain assembly and translational regulation.</title>
        <authorList>
            <person name="Mick D.U."/>
            <person name="Dennerlein S."/>
            <person name="Wiese H."/>
            <person name="Reinhold R."/>
            <person name="Pacheu-Grau D."/>
            <person name="Lorenzi I."/>
            <person name="Sasarman F."/>
            <person name="Weraarpachai W."/>
            <person name="Shoubridge E.A."/>
            <person name="Warscheid B."/>
            <person name="Rehling P."/>
        </authorList>
    </citation>
    <scope>FUNCTION</scope>
    <scope>SUBCELLULAR LOCATION</scope>
    <scope>IDENTIFICATION IN MITRAC COMPLEX</scope>
    <scope>TOPOLOGY</scope>
</reference>
<reference key="7">
    <citation type="journal article" date="2012" name="Genome Biol.">
        <title>Iterative orthology prediction uncovers new mitochondrial proteins and identifies C12orf62 as the human ortholog of COX14, a protein involved in the assembly of cytochrome c oxidase.</title>
        <authorList>
            <person name="Szklarczyk R."/>
            <person name="Wanschers B.F."/>
            <person name="Cuypers T.D."/>
            <person name="Esseling J.J."/>
            <person name="Riemersma M."/>
            <person name="van den Brand M.A."/>
            <person name="Gloerich J."/>
            <person name="Lasonder E."/>
            <person name="van den Heuvel L.P."/>
            <person name="Nijtmans L.G."/>
            <person name="Huynen M.A."/>
        </authorList>
    </citation>
    <scope>INTERACTION WITH COX17 AND COA6</scope>
    <scope>SUBCELLULAR LOCATION</scope>
</reference>
<reference key="8">
    <citation type="journal article" date="2020" name="Cell Rep.">
        <title>Dissecting the Roles of Mitochondrial Complex I Intermediate Assembly Complex Factors in the Biogenesis of Complex I.</title>
        <authorList>
            <person name="Formosa L.E."/>
            <person name="Muellner-Wong L."/>
            <person name="Reljic B."/>
            <person name="Sharpe A.J."/>
            <person name="Jackson T.D."/>
            <person name="Beilharz T.H."/>
            <person name="Stojanovski D."/>
            <person name="Lazarou M."/>
            <person name="Stroud D.A."/>
            <person name="Ryan M.T."/>
        </authorList>
    </citation>
    <scope>IDENTIFICATION IN THE MCIA COMPLEX</scope>
    <scope>FUNCTION</scope>
</reference>
<gene>
    <name evidence="6" type="primary">COA1</name>
    <name type="synonym">C7orf44</name>
    <name type="synonym">MITRAC15</name>
</gene>
<proteinExistence type="evidence at protein level"/>
<accession>Q9GZY4</accession>
<accession>A6NJU8</accession>
<accession>A8KAH8</accession>
<accession>Q9HAB7</accession>
<accession>Q9NVD2</accession>
<evidence type="ECO:0000255" key="1"/>
<evidence type="ECO:0000269" key="2">
    <source>
    </source>
</evidence>
<evidence type="ECO:0000269" key="3">
    <source>
    </source>
</evidence>
<evidence type="ECO:0000269" key="4">
    <source>
    </source>
</evidence>
<evidence type="ECO:0000305" key="5"/>
<evidence type="ECO:0000312" key="6">
    <source>
        <dbReference type="HGNC" id="HGNC:21868"/>
    </source>
</evidence>
<dbReference type="EMBL" id="AK001665">
    <property type="protein sequence ID" value="BAA91821.1"/>
    <property type="molecule type" value="mRNA"/>
</dbReference>
<dbReference type="EMBL" id="AK021905">
    <property type="protein sequence ID" value="BAB13932.1"/>
    <property type="molecule type" value="mRNA"/>
</dbReference>
<dbReference type="EMBL" id="AK023007">
    <property type="protein sequence ID" value="BAB14356.1"/>
    <property type="molecule type" value="mRNA"/>
</dbReference>
<dbReference type="EMBL" id="AK023053">
    <property type="protein sequence ID" value="BAB14379.1"/>
    <property type="molecule type" value="mRNA"/>
</dbReference>
<dbReference type="EMBL" id="AK293043">
    <property type="protein sequence ID" value="BAF85732.1"/>
    <property type="molecule type" value="mRNA"/>
</dbReference>
<dbReference type="EMBL" id="AC005189">
    <property type="status" value="NOT_ANNOTATED_CDS"/>
    <property type="molecule type" value="Genomic_DNA"/>
</dbReference>
<dbReference type="EMBL" id="CH471073">
    <property type="protein sequence ID" value="EAW94165.1"/>
    <property type="molecule type" value="Genomic_DNA"/>
</dbReference>
<dbReference type="EMBL" id="BC056884">
    <property type="protein sequence ID" value="AAH56884.1"/>
    <property type="molecule type" value="mRNA"/>
</dbReference>
<dbReference type="CCDS" id="CCDS5471.1"/>
<dbReference type="RefSeq" id="NP_001308126.1">
    <property type="nucleotide sequence ID" value="NM_001321197.2"/>
</dbReference>
<dbReference type="RefSeq" id="NP_001308127.1">
    <property type="nucleotide sequence ID" value="NM_001321198.2"/>
</dbReference>
<dbReference type="RefSeq" id="NP_001308128.1">
    <property type="nucleotide sequence ID" value="NM_001321199.2"/>
</dbReference>
<dbReference type="RefSeq" id="NP_001308129.1">
    <property type="nucleotide sequence ID" value="NM_001321200.2"/>
</dbReference>
<dbReference type="RefSeq" id="NP_001337853.1">
    <property type="nucleotide sequence ID" value="NM_001350924.2"/>
</dbReference>
<dbReference type="RefSeq" id="NP_001337854.1">
    <property type="nucleotide sequence ID" value="NM_001350925.2"/>
</dbReference>
<dbReference type="RefSeq" id="NP_001337855.1">
    <property type="nucleotide sequence ID" value="NM_001350926.2"/>
</dbReference>
<dbReference type="RefSeq" id="NP_001337856.1">
    <property type="nucleotide sequence ID" value="NM_001350927.2"/>
</dbReference>
<dbReference type="RefSeq" id="NP_001358236.1">
    <property type="nucleotide sequence ID" value="NM_001371307.1"/>
</dbReference>
<dbReference type="RefSeq" id="NP_001358237.1">
    <property type="nucleotide sequence ID" value="NM_001371308.1"/>
</dbReference>
<dbReference type="RefSeq" id="NP_001358238.1">
    <property type="nucleotide sequence ID" value="NM_001371309.1"/>
</dbReference>
<dbReference type="RefSeq" id="NP_001358239.1">
    <property type="nucleotide sequence ID" value="NM_001371310.1"/>
</dbReference>
<dbReference type="RefSeq" id="NP_001358240.1">
    <property type="nucleotide sequence ID" value="NM_001371311.1"/>
</dbReference>
<dbReference type="RefSeq" id="NP_001358241.1">
    <property type="nucleotide sequence ID" value="NM_001371312.1"/>
</dbReference>
<dbReference type="RefSeq" id="NP_001358242.1">
    <property type="nucleotide sequence ID" value="NM_001371313.1"/>
</dbReference>
<dbReference type="RefSeq" id="NP_001358243.1">
    <property type="nucleotide sequence ID" value="NM_001371314.1"/>
</dbReference>
<dbReference type="RefSeq" id="NP_001358244.1">
    <property type="nucleotide sequence ID" value="NM_001371315.1"/>
</dbReference>
<dbReference type="RefSeq" id="NP_001358245.1">
    <property type="nucleotide sequence ID" value="NM_001371316.1"/>
</dbReference>
<dbReference type="RefSeq" id="NP_060694.2">
    <property type="nucleotide sequence ID" value="NM_018224.4"/>
</dbReference>
<dbReference type="RefSeq" id="XP_005249864.1">
    <property type="nucleotide sequence ID" value="XM_005249807.4"/>
</dbReference>
<dbReference type="RefSeq" id="XP_006715815.1">
    <property type="nucleotide sequence ID" value="XM_006715752.2"/>
</dbReference>
<dbReference type="RefSeq" id="XP_016867903.1">
    <property type="nucleotide sequence ID" value="XM_017012414.1"/>
</dbReference>
<dbReference type="RefSeq" id="XP_016867904.1">
    <property type="nucleotide sequence ID" value="XM_017012415.1"/>
</dbReference>
<dbReference type="RefSeq" id="XP_016867905.1">
    <property type="nucleotide sequence ID" value="XM_017012416.1"/>
</dbReference>
<dbReference type="RefSeq" id="XP_016867906.1">
    <property type="nucleotide sequence ID" value="XM_017012417.1"/>
</dbReference>
<dbReference type="RefSeq" id="XP_016867907.1">
    <property type="nucleotide sequence ID" value="XM_017012418.1"/>
</dbReference>
<dbReference type="RefSeq" id="XP_016867908.1">
    <property type="nucleotide sequence ID" value="XM_017012419.1"/>
</dbReference>
<dbReference type="RefSeq" id="XP_016867910.1">
    <property type="nucleotide sequence ID" value="XM_017012421.1"/>
</dbReference>
<dbReference type="RefSeq" id="XP_016867911.1">
    <property type="nucleotide sequence ID" value="XM_017012422.1"/>
</dbReference>
<dbReference type="RefSeq" id="XP_016867912.1">
    <property type="nucleotide sequence ID" value="XM_017012423.1"/>
</dbReference>
<dbReference type="RefSeq" id="XP_016867913.1">
    <property type="nucleotide sequence ID" value="XM_017012424.1"/>
</dbReference>
<dbReference type="RefSeq" id="XP_016867914.1">
    <property type="nucleotide sequence ID" value="XM_017012425.1"/>
</dbReference>
<dbReference type="RefSeq" id="XP_016867915.1">
    <property type="nucleotide sequence ID" value="XM_017012426.1"/>
</dbReference>
<dbReference type="RefSeq" id="XP_016867916.1">
    <property type="nucleotide sequence ID" value="XM_017012427.1"/>
</dbReference>
<dbReference type="RefSeq" id="XP_016867917.1">
    <property type="nucleotide sequence ID" value="XM_017012428.1"/>
</dbReference>
<dbReference type="RefSeq" id="XP_016867918.1">
    <property type="nucleotide sequence ID" value="XM_017012429.1"/>
</dbReference>
<dbReference type="RefSeq" id="XP_016867919.1">
    <property type="nucleotide sequence ID" value="XM_017012430.1"/>
</dbReference>
<dbReference type="RefSeq" id="XP_016867920.1">
    <property type="nucleotide sequence ID" value="XM_017012431.1"/>
</dbReference>
<dbReference type="RefSeq" id="XP_016867921.1">
    <property type="nucleotide sequence ID" value="XM_017012432.1"/>
</dbReference>
<dbReference type="RefSeq" id="XP_047276559.1">
    <property type="nucleotide sequence ID" value="XM_047420603.1"/>
</dbReference>
<dbReference type="RefSeq" id="XP_047276560.1">
    <property type="nucleotide sequence ID" value="XM_047420604.1"/>
</dbReference>
<dbReference type="RefSeq" id="XP_047276561.1">
    <property type="nucleotide sequence ID" value="XM_047420605.1"/>
</dbReference>
<dbReference type="RefSeq" id="XP_054214607.1">
    <property type="nucleotide sequence ID" value="XM_054358632.1"/>
</dbReference>
<dbReference type="RefSeq" id="XP_054214608.1">
    <property type="nucleotide sequence ID" value="XM_054358633.1"/>
</dbReference>
<dbReference type="RefSeq" id="XP_054214609.1">
    <property type="nucleotide sequence ID" value="XM_054358634.1"/>
</dbReference>
<dbReference type="SMR" id="Q9GZY4"/>
<dbReference type="BioGRID" id="120862">
    <property type="interactions" value="32"/>
</dbReference>
<dbReference type="ComplexPortal" id="CPX-6322">
    <property type="entry name" value="Mitochondrial complex I intermediate assembly (MCIA) complex"/>
</dbReference>
<dbReference type="CORUM" id="Q9GZY4"/>
<dbReference type="FunCoup" id="Q9GZY4">
    <property type="interactions" value="637"/>
</dbReference>
<dbReference type="IntAct" id="Q9GZY4">
    <property type="interactions" value="28"/>
</dbReference>
<dbReference type="STRING" id="9606.ENSP00000379218"/>
<dbReference type="iPTMnet" id="Q9GZY4"/>
<dbReference type="PhosphoSitePlus" id="Q9GZY4"/>
<dbReference type="BioMuta" id="COA1"/>
<dbReference type="DMDM" id="74733508"/>
<dbReference type="jPOST" id="Q9GZY4"/>
<dbReference type="MassIVE" id="Q9GZY4"/>
<dbReference type="PaxDb" id="9606-ENSP00000379218"/>
<dbReference type="PeptideAtlas" id="Q9GZY4"/>
<dbReference type="ProteomicsDB" id="80173"/>
<dbReference type="Pumba" id="Q9GZY4"/>
<dbReference type="TopDownProteomics" id="Q9GZY4"/>
<dbReference type="Antibodypedia" id="2314">
    <property type="antibodies" value="79 antibodies from 14 providers"/>
</dbReference>
<dbReference type="DNASU" id="55744"/>
<dbReference type="Ensembl" id="ENST00000223336.11">
    <property type="protein sequence ID" value="ENSP00000223336.6"/>
    <property type="gene ID" value="ENSG00000106603.20"/>
</dbReference>
<dbReference type="Ensembl" id="ENST00000310564.10">
    <property type="protein sequence ID" value="ENSP00000312100.6"/>
    <property type="gene ID" value="ENSG00000106603.20"/>
</dbReference>
<dbReference type="Ensembl" id="ENST00000395879.5">
    <property type="protein sequence ID" value="ENSP00000379218.1"/>
    <property type="gene ID" value="ENSG00000106603.20"/>
</dbReference>
<dbReference type="Ensembl" id="ENST00000415076.6">
    <property type="protein sequence ID" value="ENSP00000400759.1"/>
    <property type="gene ID" value="ENSG00000106603.20"/>
</dbReference>
<dbReference type="Ensembl" id="ENST00000438444.5">
    <property type="protein sequence ID" value="ENSP00000395586.1"/>
    <property type="gene ID" value="ENSG00000106603.20"/>
</dbReference>
<dbReference type="Ensembl" id="ENST00000446330.6">
    <property type="protein sequence ID" value="ENSP00000416406.1"/>
    <property type="gene ID" value="ENSG00000106603.20"/>
</dbReference>
<dbReference type="Ensembl" id="ENST00000446564.5">
    <property type="protein sequence ID" value="ENSP00000413777.1"/>
    <property type="gene ID" value="ENSG00000106603.20"/>
</dbReference>
<dbReference type="GeneID" id="55744"/>
<dbReference type="KEGG" id="hsa:55744"/>
<dbReference type="MANE-Select" id="ENST00000223336.11">
    <property type="protein sequence ID" value="ENSP00000223336.6"/>
    <property type="RefSeq nucleotide sequence ID" value="NM_018224.4"/>
    <property type="RefSeq protein sequence ID" value="NP_060694.2"/>
</dbReference>
<dbReference type="UCSC" id="uc003tin.2">
    <property type="organism name" value="human"/>
</dbReference>
<dbReference type="AGR" id="HGNC:21868"/>
<dbReference type="CTD" id="55744"/>
<dbReference type="DisGeNET" id="55744"/>
<dbReference type="GeneCards" id="COA1"/>
<dbReference type="HGNC" id="HGNC:21868">
    <property type="gene designation" value="COA1"/>
</dbReference>
<dbReference type="HPA" id="ENSG00000106603">
    <property type="expression patterns" value="Low tissue specificity"/>
</dbReference>
<dbReference type="MalaCards" id="COA1"/>
<dbReference type="MIM" id="614769">
    <property type="type" value="gene"/>
</dbReference>
<dbReference type="neXtProt" id="NX_Q9GZY4"/>
<dbReference type="OpenTargets" id="ENSG00000106603"/>
<dbReference type="PharmGKB" id="PA162380473"/>
<dbReference type="VEuPathDB" id="HostDB:ENSG00000106603"/>
<dbReference type="eggNOG" id="ENOG502S561">
    <property type="taxonomic scope" value="Eukaryota"/>
</dbReference>
<dbReference type="GeneTree" id="ENSGT00440000033985"/>
<dbReference type="HOGENOM" id="CLU_117249_0_0_1"/>
<dbReference type="InParanoid" id="Q9GZY4"/>
<dbReference type="OMA" id="RQCWCLQ"/>
<dbReference type="OrthoDB" id="10037790at2759"/>
<dbReference type="PAN-GO" id="Q9GZY4">
    <property type="GO annotations" value="3 GO annotations based on evolutionary models"/>
</dbReference>
<dbReference type="PhylomeDB" id="Q9GZY4"/>
<dbReference type="TreeFam" id="TF324468"/>
<dbReference type="PathwayCommons" id="Q9GZY4"/>
<dbReference type="Reactome" id="R-HSA-611105">
    <property type="pathway name" value="Respiratory electron transport"/>
</dbReference>
<dbReference type="Reactome" id="R-HSA-6799198">
    <property type="pathway name" value="Complex I biogenesis"/>
</dbReference>
<dbReference type="Reactome" id="R-HSA-9864848">
    <property type="pathway name" value="Complex IV assembly"/>
</dbReference>
<dbReference type="SignaLink" id="Q9GZY4"/>
<dbReference type="SIGNOR" id="Q9GZY4"/>
<dbReference type="BioGRID-ORCS" id="55744">
    <property type="hits" value="18 hits in 1155 CRISPR screens"/>
</dbReference>
<dbReference type="ChiTaRS" id="COA1">
    <property type="organism name" value="human"/>
</dbReference>
<dbReference type="GenomeRNAi" id="55744"/>
<dbReference type="Pharos" id="Q9GZY4">
    <property type="development level" value="Tbio"/>
</dbReference>
<dbReference type="PRO" id="PR:Q9GZY4"/>
<dbReference type="Proteomes" id="UP000005640">
    <property type="component" value="Chromosome 7"/>
</dbReference>
<dbReference type="RNAct" id="Q9GZY4">
    <property type="molecule type" value="protein"/>
</dbReference>
<dbReference type="Bgee" id="ENSG00000106603">
    <property type="expression patterns" value="Expressed in secondary oocyte and 191 other cell types or tissues"/>
</dbReference>
<dbReference type="ExpressionAtlas" id="Q9GZY4">
    <property type="expression patterns" value="baseline and differential"/>
</dbReference>
<dbReference type="GO" id="GO:0005829">
    <property type="term" value="C:cytosol"/>
    <property type="evidence" value="ECO:0000314"/>
    <property type="project" value="HPA"/>
</dbReference>
<dbReference type="GO" id="GO:0005743">
    <property type="term" value="C:mitochondrial inner membrane"/>
    <property type="evidence" value="ECO:0000314"/>
    <property type="project" value="UniProtKB"/>
</dbReference>
<dbReference type="GO" id="GO:0005739">
    <property type="term" value="C:mitochondrion"/>
    <property type="evidence" value="ECO:0000314"/>
    <property type="project" value="HPA"/>
</dbReference>
<dbReference type="GO" id="GO:0033617">
    <property type="term" value="P:mitochondrial cytochrome c oxidase assembly"/>
    <property type="evidence" value="ECO:0000315"/>
    <property type="project" value="UniProtKB"/>
</dbReference>
<dbReference type="GO" id="GO:0032981">
    <property type="term" value="P:mitochondrial respiratory chain complex I assembly"/>
    <property type="evidence" value="ECO:0000315"/>
    <property type="project" value="UniProtKB"/>
</dbReference>
<dbReference type="InterPro" id="IPR014807">
    <property type="entry name" value="Coa1"/>
</dbReference>
<dbReference type="PANTHER" id="PTHR47148">
    <property type="entry name" value="CYTOCHROME C OXIDASE ASSEMBLY FACTOR 1 HOMOLOG"/>
    <property type="match status" value="1"/>
</dbReference>
<dbReference type="PANTHER" id="PTHR47148:SF1">
    <property type="entry name" value="CYTOCHROME C OXIDASE ASSEMBLY FACTOR 1 HOMOLOG"/>
    <property type="match status" value="1"/>
</dbReference>
<dbReference type="Pfam" id="PF08695">
    <property type="entry name" value="Coa1"/>
    <property type="match status" value="1"/>
</dbReference>
<comment type="function">
    <text evidence="3 4">Component of the MITRAC (mitochondrial translation regulation assembly intermediate of cytochrome c oxidase complex) complex, that regulates cytochrome c oxidase assembly. MITRAC complexes regulate both translation of mitochondrial encoded components and assembly of nuclear-encoded components imported in mitochondrion. Required for assembly of mitochondrial respiratory chain complex I and complex IV (PubMed:23260140). As part of the MCIA complex, required for efficient assembly of the mitochondrial complex I (PubMed:32320651).</text>
</comment>
<comment type="subunit">
    <text evidence="2 3 4">Component of the MITRAC (mitochondrial translation regulation assembly intermediate of cytochrome c oxidase complex) complex, the core components of this complex being COA3/MITRAC12 and COX14. Interacts with COX17 and COA6. Part of the mitochondrial complex I assembly/MCIA complex that comprises at least the core subunits TMEM126B, NDUFAF1, ECSIT and ACAD9 and complement subunits such as COA1 and TMEM186 (PubMed:32320651).</text>
</comment>
<comment type="subcellular location">
    <subcellularLocation>
        <location evidence="2 3">Mitochondrion inner membrane</location>
        <topology evidence="2 3">Single-pass membrane protein</topology>
    </subcellularLocation>
</comment>
<comment type="similarity">
    <text evidence="5">Belongs to the COA1 family.</text>
</comment>
<organism>
    <name type="scientific">Homo sapiens</name>
    <name type="common">Human</name>
    <dbReference type="NCBI Taxonomy" id="9606"/>
    <lineage>
        <taxon>Eukaryota</taxon>
        <taxon>Metazoa</taxon>
        <taxon>Chordata</taxon>
        <taxon>Craniata</taxon>
        <taxon>Vertebrata</taxon>
        <taxon>Euteleostomi</taxon>
        <taxon>Mammalia</taxon>
        <taxon>Eutheria</taxon>
        <taxon>Euarchontoglires</taxon>
        <taxon>Primates</taxon>
        <taxon>Haplorrhini</taxon>
        <taxon>Catarrhini</taxon>
        <taxon>Hominidae</taxon>
        <taxon>Homo</taxon>
    </lineage>
</organism>
<protein>
    <recommendedName>
        <fullName evidence="5">Cytochrome c oxidase assembly factor 1 homolog</fullName>
    </recommendedName>
    <alternativeName>
        <fullName>Mitochondrial translation regulation assembly intermediate of cytochrome c oxidase protein of 15 kDa</fullName>
    </alternativeName>
</protein>
<feature type="chain" id="PRO_0000279407" description="Cytochrome c oxidase assembly factor 1 homolog">
    <location>
        <begin position="1"/>
        <end position="146"/>
    </location>
</feature>
<feature type="topological domain" description="Mitochondrial matrix" evidence="1">
    <location>
        <begin position="1"/>
        <end position="14"/>
    </location>
</feature>
<feature type="transmembrane region" description="Helical" evidence="1">
    <location>
        <begin position="15"/>
        <end position="37"/>
    </location>
</feature>
<feature type="topological domain" description="Mitochondrial intermembrane" evidence="1">
    <location>
        <begin position="38"/>
        <end position="146"/>
    </location>
</feature>
<feature type="sequence conflict" description="In Ref. 1; BAB13932." evidence="5" ref="1">
    <original>M</original>
    <variation>T</variation>
    <location>
        <position position="2"/>
    </location>
</feature>
<feature type="sequence conflict" description="In Ref. 1; BAA91821." evidence="5" ref="1">
    <original>A</original>
    <variation>V</variation>
    <location>
        <position position="17"/>
    </location>
</feature>
<feature type="sequence conflict" description="In Ref. 1; BAB13932." evidence="5" ref="1">
    <original>H</original>
    <variation>R</variation>
    <location>
        <position position="116"/>
    </location>
</feature>
<keyword id="KW-0472">Membrane</keyword>
<keyword id="KW-0496">Mitochondrion</keyword>
<keyword id="KW-0999">Mitochondrion inner membrane</keyword>
<keyword id="KW-1267">Proteomics identification</keyword>
<keyword id="KW-1185">Reference proteome</keyword>
<keyword id="KW-0812">Transmembrane</keyword>
<keyword id="KW-1133">Transmembrane helix</keyword>